<reference key="1">
    <citation type="journal article" date="2003" name="Genome Res.">
        <title>Comparative genome analysis of Vibrio vulnificus, a marine pathogen.</title>
        <authorList>
            <person name="Chen C.-Y."/>
            <person name="Wu K.-M."/>
            <person name="Chang Y.-C."/>
            <person name="Chang C.-H."/>
            <person name="Tsai H.-C."/>
            <person name="Liao T.-L."/>
            <person name="Liu Y.-M."/>
            <person name="Chen H.-J."/>
            <person name="Shen A.B.-T."/>
            <person name="Li J.-C."/>
            <person name="Su T.-L."/>
            <person name="Shao C.-P."/>
            <person name="Lee C.-T."/>
            <person name="Hor L.-I."/>
            <person name="Tsai S.-F."/>
        </authorList>
    </citation>
    <scope>NUCLEOTIDE SEQUENCE [LARGE SCALE GENOMIC DNA]</scope>
    <source>
        <strain>YJ016</strain>
    </source>
</reference>
<organism>
    <name type="scientific">Vibrio vulnificus (strain YJ016)</name>
    <dbReference type="NCBI Taxonomy" id="196600"/>
    <lineage>
        <taxon>Bacteria</taxon>
        <taxon>Pseudomonadati</taxon>
        <taxon>Pseudomonadota</taxon>
        <taxon>Gammaproteobacteria</taxon>
        <taxon>Vibrionales</taxon>
        <taxon>Vibrionaceae</taxon>
        <taxon>Vibrio</taxon>
    </lineage>
</organism>
<gene>
    <name evidence="1" type="primary">nrfA</name>
    <name type="ordered locus">VV1250</name>
</gene>
<protein>
    <recommendedName>
        <fullName evidence="1">Cytochrome c-552</fullName>
        <ecNumber evidence="1">1.7.2.2</ecNumber>
    </recommendedName>
    <alternativeName>
        <fullName evidence="1">Ammonia-forming cytochrome c nitrite reductase</fullName>
        <shortName evidence="1">Cytochrome c nitrite reductase</shortName>
    </alternativeName>
</protein>
<feature type="signal peptide" evidence="1">
    <location>
        <begin position="1"/>
        <end position="29"/>
    </location>
</feature>
<feature type="chain" id="PRO_0000268984" description="Cytochrome c-552">
    <location>
        <begin position="30"/>
        <end position="474"/>
    </location>
</feature>
<feature type="binding site" description="axial binding residue" evidence="1">
    <location>
        <position position="91"/>
    </location>
    <ligand>
        <name>heme c</name>
        <dbReference type="ChEBI" id="CHEBI:61717"/>
        <label>3</label>
    </ligand>
    <ligandPart>
        <name>Fe</name>
        <dbReference type="ChEBI" id="CHEBI:18248"/>
    </ligandPart>
</feature>
<feature type="binding site" description="covalent" evidence="1">
    <location>
        <position position="119"/>
    </location>
    <ligand>
        <name>heme</name>
        <dbReference type="ChEBI" id="CHEBI:30413"/>
        <label>1</label>
    </ligand>
</feature>
<feature type="binding site" description="covalent" evidence="1">
    <location>
        <position position="122"/>
    </location>
    <ligand>
        <name>heme</name>
        <dbReference type="ChEBI" id="CHEBI:30413"/>
        <label>1</label>
    </ligand>
</feature>
<feature type="binding site" description="axial binding residue" evidence="1">
    <location>
        <position position="123"/>
    </location>
    <ligand>
        <name>heme</name>
        <dbReference type="ChEBI" id="CHEBI:30413"/>
        <label>1</label>
    </ligand>
    <ligandPart>
        <name>Fe</name>
        <dbReference type="ChEBI" id="CHEBI:18248"/>
    </ligandPart>
</feature>
<feature type="binding site" description="covalent" evidence="1">
    <location>
        <position position="157"/>
    </location>
    <ligand>
        <name>heme c</name>
        <dbReference type="ChEBI" id="CHEBI:61717"/>
        <label>2</label>
    </ligand>
</feature>
<feature type="binding site" description="covalent" evidence="1">
    <location>
        <position position="160"/>
    </location>
    <ligand>
        <name>heme c</name>
        <dbReference type="ChEBI" id="CHEBI:61717"/>
        <label>2</label>
    </ligand>
</feature>
<feature type="binding site" description="axial binding residue" evidence="1">
    <location>
        <position position="161"/>
    </location>
    <ligand>
        <name>heme c</name>
        <dbReference type="ChEBI" id="CHEBI:61717"/>
        <label>2</label>
    </ligand>
    <ligandPart>
        <name>Fe</name>
        <dbReference type="ChEBI" id="CHEBI:18248"/>
    </ligandPart>
</feature>
<feature type="binding site" description="covalent" evidence="1">
    <location>
        <position position="206"/>
    </location>
    <ligand>
        <name>heme c</name>
        <dbReference type="ChEBI" id="CHEBI:61717"/>
        <label>3</label>
    </ligand>
</feature>
<feature type="binding site" description="covalent" evidence="1">
    <location>
        <position position="209"/>
    </location>
    <ligand>
        <name>heme c</name>
        <dbReference type="ChEBI" id="CHEBI:61717"/>
        <label>3</label>
    </ligand>
</feature>
<feature type="binding site" description="axial binding residue" evidence="1">
    <location>
        <position position="210"/>
    </location>
    <ligand>
        <name>heme c</name>
        <dbReference type="ChEBI" id="CHEBI:61717"/>
        <label>3</label>
    </ligand>
    <ligandPart>
        <name>Fe</name>
        <dbReference type="ChEBI" id="CHEBI:18248"/>
    </ligandPart>
</feature>
<feature type="binding site" evidence="1">
    <location>
        <position position="212"/>
    </location>
    <ligand>
        <name>Ca(2+)</name>
        <dbReference type="ChEBI" id="CHEBI:29108"/>
    </ligand>
</feature>
<feature type="binding site" evidence="1">
    <location>
        <position position="213"/>
    </location>
    <ligand>
        <name>Ca(2+)</name>
        <dbReference type="ChEBI" id="CHEBI:29108"/>
    </ligand>
</feature>
<feature type="binding site" evidence="1">
    <location>
        <position position="213"/>
    </location>
    <ligand>
        <name>substrate</name>
    </ligand>
</feature>
<feature type="binding site" evidence="1">
    <location>
        <position position="258"/>
    </location>
    <ligand>
        <name>Ca(2+)</name>
        <dbReference type="ChEBI" id="CHEBI:29108"/>
    </ligand>
</feature>
<feature type="binding site" evidence="1">
    <location>
        <position position="260"/>
    </location>
    <ligand>
        <name>Ca(2+)</name>
        <dbReference type="ChEBI" id="CHEBI:29108"/>
    </ligand>
</feature>
<feature type="binding site" evidence="1">
    <location>
        <position position="261"/>
    </location>
    <ligand>
        <name>substrate</name>
    </ligand>
</feature>
<feature type="binding site" description="axial binding residue" evidence="1">
    <location>
        <position position="272"/>
    </location>
    <ligand>
        <name>heme c</name>
        <dbReference type="ChEBI" id="CHEBI:61717"/>
        <label>5</label>
    </ligand>
    <ligandPart>
        <name>Fe</name>
        <dbReference type="ChEBI" id="CHEBI:18248"/>
    </ligandPart>
</feature>
<feature type="binding site" description="covalent" evidence="1">
    <location>
        <position position="279"/>
    </location>
    <ligand>
        <name>heme c</name>
        <dbReference type="ChEBI" id="CHEBI:61717"/>
        <label>4</label>
    </ligand>
</feature>
<feature type="binding site" description="covalent" evidence="1">
    <location>
        <position position="282"/>
    </location>
    <ligand>
        <name>heme c</name>
        <dbReference type="ChEBI" id="CHEBI:61717"/>
        <label>4</label>
    </ligand>
</feature>
<feature type="binding site" description="axial binding residue" evidence="1">
    <location>
        <position position="283"/>
    </location>
    <ligand>
        <name>heme c</name>
        <dbReference type="ChEBI" id="CHEBI:61717"/>
        <label>4</label>
    </ligand>
    <ligandPart>
        <name>Fe</name>
        <dbReference type="ChEBI" id="CHEBI:18248"/>
    </ligandPart>
</feature>
<feature type="binding site" description="axial binding residue" evidence="1">
    <location>
        <position position="298"/>
    </location>
    <ligand>
        <name>heme c</name>
        <dbReference type="ChEBI" id="CHEBI:61717"/>
        <label>2</label>
    </ligand>
    <ligandPart>
        <name>Fe</name>
        <dbReference type="ChEBI" id="CHEBI:18248"/>
    </ligandPart>
</feature>
<feature type="binding site" description="covalent" evidence="1">
    <location>
        <position position="311"/>
    </location>
    <ligand>
        <name>heme c</name>
        <dbReference type="ChEBI" id="CHEBI:61717"/>
        <label>5</label>
    </ligand>
</feature>
<feature type="binding site" description="covalent" evidence="1">
    <location>
        <position position="314"/>
    </location>
    <ligand>
        <name>heme c</name>
        <dbReference type="ChEBI" id="CHEBI:61717"/>
        <label>5</label>
    </ligand>
</feature>
<feature type="binding site" description="axial binding residue" evidence="1">
    <location>
        <position position="315"/>
    </location>
    <ligand>
        <name>heme c</name>
        <dbReference type="ChEBI" id="CHEBI:61717"/>
        <label>5</label>
    </ligand>
    <ligandPart>
        <name>Fe</name>
        <dbReference type="ChEBI" id="CHEBI:18248"/>
    </ligandPart>
</feature>
<feature type="binding site" description="axial binding residue" evidence="1">
    <location>
        <position position="390"/>
    </location>
    <ligand>
        <name>heme c</name>
        <dbReference type="ChEBI" id="CHEBI:61717"/>
        <label>4</label>
    </ligand>
    <ligandPart>
        <name>Fe</name>
        <dbReference type="ChEBI" id="CHEBI:18248"/>
    </ligandPart>
</feature>
<proteinExistence type="inferred from homology"/>
<comment type="function">
    <text evidence="1">Catalyzes the reduction of nitrite to ammonia, consuming six electrons in the process.</text>
</comment>
<comment type="catalytic activity">
    <reaction evidence="1">
        <text>6 Fe(III)-[cytochrome c] + NH4(+) + 2 H2O = 6 Fe(II)-[cytochrome c] + nitrite + 8 H(+)</text>
        <dbReference type="Rhea" id="RHEA:13089"/>
        <dbReference type="Rhea" id="RHEA-COMP:10350"/>
        <dbReference type="Rhea" id="RHEA-COMP:14399"/>
        <dbReference type="ChEBI" id="CHEBI:15377"/>
        <dbReference type="ChEBI" id="CHEBI:15378"/>
        <dbReference type="ChEBI" id="CHEBI:16301"/>
        <dbReference type="ChEBI" id="CHEBI:28938"/>
        <dbReference type="ChEBI" id="CHEBI:29033"/>
        <dbReference type="ChEBI" id="CHEBI:29034"/>
        <dbReference type="EC" id="1.7.2.2"/>
    </reaction>
</comment>
<comment type="cofactor">
    <cofactor evidence="1">
        <name>Ca(2+)</name>
        <dbReference type="ChEBI" id="CHEBI:29108"/>
    </cofactor>
    <text evidence="1">Binds 1 Ca(2+) ion per monomer.</text>
</comment>
<comment type="cofactor">
    <cofactor evidence="1">
        <name>heme c</name>
        <dbReference type="ChEBI" id="CHEBI:61717"/>
    </cofactor>
    <text evidence="1">Binds 5 heme c groups covalently per monomer.</text>
</comment>
<comment type="pathway">
    <text evidence="1">Nitrogen metabolism; nitrate reduction (assimilation).</text>
</comment>
<comment type="subcellular location">
    <subcellularLocation>
        <location evidence="1">Periplasm</location>
    </subcellularLocation>
</comment>
<comment type="similarity">
    <text evidence="1">Belongs to the cytochrome c-552 family.</text>
</comment>
<sequence>MSIKHWMASSVSVTALVMTALLNITAVSAEEKGLVDPRNDAFEQNHPDQYQSWKKTSESVEIEDALAEDPNMVILWAGYGFAKDYNKARGHFYALDDVRQTLRTGGPQDAKSGPMPMACWSCKSPDVARVIDERGEDGYFEGKWARLGAEIANPIGCADCHDTRSEKFKNGEPELALTRPYVERAFQAINKPFEQQSRLDKQASVCAQCHVEYYFTGPTKAVKFPWDMGTGVQQMEEYYDALGFADWTHAVSKAPMLKAQHPGFETWREGIHGKNKVVCVDCHMPKVKKEDGTVYTDHKVGNPFDRFEDTCAQCHTQSKDQLREIVSTRKAQVLNMKLTAEKQIVAAHFEAGAAWKAGATEEEMKPILQDIRHAQWRWDYAIASHGVHMHAPEVALEVLGTAVDRAADARTKLVRLLATKGITEPVQIPDISTKAAAQKALGMDMEKMNAEKQHFLKTVVPDWDKAAAERESKY</sequence>
<name>NRFA_VIBVY</name>
<dbReference type="EC" id="1.7.2.2" evidence="1"/>
<dbReference type="EMBL" id="BA000037">
    <property type="protein sequence ID" value="BAC94014.1"/>
    <property type="molecule type" value="Genomic_DNA"/>
</dbReference>
<dbReference type="RefSeq" id="WP_011080841.1">
    <property type="nucleotide sequence ID" value="NC_005139.1"/>
</dbReference>
<dbReference type="SMR" id="Q7MM23"/>
<dbReference type="STRING" id="672.VV93_v1c11690"/>
<dbReference type="KEGG" id="vvy:VV1250"/>
<dbReference type="PATRIC" id="fig|196600.6.peg.1242"/>
<dbReference type="eggNOG" id="COG3303">
    <property type="taxonomic scope" value="Bacteria"/>
</dbReference>
<dbReference type="HOGENOM" id="CLU_035040_1_0_6"/>
<dbReference type="UniPathway" id="UPA00653"/>
<dbReference type="Proteomes" id="UP000002675">
    <property type="component" value="Chromosome I"/>
</dbReference>
<dbReference type="GO" id="GO:0030288">
    <property type="term" value="C:outer membrane-bounded periplasmic space"/>
    <property type="evidence" value="ECO:0007669"/>
    <property type="project" value="TreeGrafter"/>
</dbReference>
<dbReference type="GO" id="GO:0005509">
    <property type="term" value="F:calcium ion binding"/>
    <property type="evidence" value="ECO:0007669"/>
    <property type="project" value="UniProtKB-UniRule"/>
</dbReference>
<dbReference type="GO" id="GO:0020037">
    <property type="term" value="F:heme binding"/>
    <property type="evidence" value="ECO:0007669"/>
    <property type="project" value="InterPro"/>
</dbReference>
<dbReference type="GO" id="GO:0005506">
    <property type="term" value="F:iron ion binding"/>
    <property type="evidence" value="ECO:0007669"/>
    <property type="project" value="UniProtKB-UniRule"/>
</dbReference>
<dbReference type="GO" id="GO:0042279">
    <property type="term" value="F:nitrite reductase (cytochrome, ammonia-forming) activity"/>
    <property type="evidence" value="ECO:0007669"/>
    <property type="project" value="UniProtKB-UniRule"/>
</dbReference>
<dbReference type="GO" id="GO:0019645">
    <property type="term" value="P:anaerobic electron transport chain"/>
    <property type="evidence" value="ECO:0007669"/>
    <property type="project" value="TreeGrafter"/>
</dbReference>
<dbReference type="GO" id="GO:0042128">
    <property type="term" value="P:nitrate assimilation"/>
    <property type="evidence" value="ECO:0007669"/>
    <property type="project" value="UniProtKB-UniRule"/>
</dbReference>
<dbReference type="CDD" id="cd00548">
    <property type="entry name" value="NrfA-like"/>
    <property type="match status" value="1"/>
</dbReference>
<dbReference type="FunFam" id="1.10.1130.10:FF:000002">
    <property type="entry name" value="Cytochrome c-552"/>
    <property type="match status" value="1"/>
</dbReference>
<dbReference type="FunFam" id="1.20.140.10:FF:000014">
    <property type="entry name" value="Cytochrome c-552"/>
    <property type="match status" value="1"/>
</dbReference>
<dbReference type="Gene3D" id="1.20.140.10">
    <property type="entry name" value="Butyryl-CoA Dehydrogenase, subunit A, domain 3"/>
    <property type="match status" value="1"/>
</dbReference>
<dbReference type="Gene3D" id="1.10.1130.10">
    <property type="entry name" value="Flavocytochrome C3, Chain A"/>
    <property type="match status" value="1"/>
</dbReference>
<dbReference type="HAMAP" id="MF_01182">
    <property type="entry name" value="Cytochrom_C552"/>
    <property type="match status" value="1"/>
</dbReference>
<dbReference type="InterPro" id="IPR003321">
    <property type="entry name" value="Cyt_c552"/>
</dbReference>
<dbReference type="InterPro" id="IPR017570">
    <property type="entry name" value="Cyt_c_NO2Rdtase_formate-dep"/>
</dbReference>
<dbReference type="InterPro" id="IPR036280">
    <property type="entry name" value="Multihaem_cyt_sf"/>
</dbReference>
<dbReference type="NCBIfam" id="TIGR03152">
    <property type="entry name" value="cyto_c552_HCOOH"/>
    <property type="match status" value="1"/>
</dbReference>
<dbReference type="NCBIfam" id="NF008339">
    <property type="entry name" value="PRK11125.1"/>
    <property type="match status" value="1"/>
</dbReference>
<dbReference type="PANTHER" id="PTHR30633:SF0">
    <property type="entry name" value="CYTOCHROME C-552"/>
    <property type="match status" value="1"/>
</dbReference>
<dbReference type="PANTHER" id="PTHR30633">
    <property type="entry name" value="CYTOCHROME C-552 RESPIRATORY NITRITE REDUCTASE"/>
    <property type="match status" value="1"/>
</dbReference>
<dbReference type="Pfam" id="PF02335">
    <property type="entry name" value="Cytochrom_C552"/>
    <property type="match status" value="1"/>
</dbReference>
<dbReference type="PIRSF" id="PIRSF000243">
    <property type="entry name" value="Cyt_c552"/>
    <property type="match status" value="1"/>
</dbReference>
<dbReference type="SUPFAM" id="SSF48695">
    <property type="entry name" value="Multiheme cytochromes"/>
    <property type="match status" value="1"/>
</dbReference>
<dbReference type="PROSITE" id="PS51008">
    <property type="entry name" value="MULTIHEME_CYTC"/>
    <property type="match status" value="1"/>
</dbReference>
<accession>Q7MM23</accession>
<keyword id="KW-0106">Calcium</keyword>
<keyword id="KW-0249">Electron transport</keyword>
<keyword id="KW-0349">Heme</keyword>
<keyword id="KW-0408">Iron</keyword>
<keyword id="KW-0479">Metal-binding</keyword>
<keyword id="KW-0560">Oxidoreductase</keyword>
<keyword id="KW-0574">Periplasm</keyword>
<keyword id="KW-0732">Signal</keyword>
<keyword id="KW-0813">Transport</keyword>
<evidence type="ECO:0000255" key="1">
    <source>
        <dbReference type="HAMAP-Rule" id="MF_01182"/>
    </source>
</evidence>